<dbReference type="EMBL" id="CP000102">
    <property type="protein sequence ID" value="ABC57514.1"/>
    <property type="molecule type" value="Genomic_DNA"/>
</dbReference>
<dbReference type="RefSeq" id="WP_011406713.1">
    <property type="nucleotide sequence ID" value="NC_007681.1"/>
</dbReference>
<dbReference type="SMR" id="Q2NF89"/>
<dbReference type="STRING" id="339860.Msp_1133"/>
<dbReference type="KEGG" id="mst:Msp_1133"/>
<dbReference type="eggNOG" id="arCOG04101">
    <property type="taxonomic scope" value="Archaea"/>
</dbReference>
<dbReference type="HOGENOM" id="CLU_069688_2_1_2"/>
<dbReference type="OrthoDB" id="117390at2157"/>
<dbReference type="Proteomes" id="UP000001931">
    <property type="component" value="Chromosome"/>
</dbReference>
<dbReference type="GO" id="GO:0005886">
    <property type="term" value="C:plasma membrane"/>
    <property type="evidence" value="ECO:0007669"/>
    <property type="project" value="UniProtKB-SubCell"/>
</dbReference>
<dbReference type="GO" id="GO:0005524">
    <property type="term" value="F:ATP binding"/>
    <property type="evidence" value="ECO:0007669"/>
    <property type="project" value="UniProtKB-UniRule"/>
</dbReference>
<dbReference type="GO" id="GO:0046933">
    <property type="term" value="F:proton-transporting ATP synthase activity, rotational mechanism"/>
    <property type="evidence" value="ECO:0007669"/>
    <property type="project" value="UniProtKB-UniRule"/>
</dbReference>
<dbReference type="GO" id="GO:0046961">
    <property type="term" value="F:proton-transporting ATPase activity, rotational mechanism"/>
    <property type="evidence" value="ECO:0007669"/>
    <property type="project" value="InterPro"/>
</dbReference>
<dbReference type="GO" id="GO:0042777">
    <property type="term" value="P:proton motive force-driven plasma membrane ATP synthesis"/>
    <property type="evidence" value="ECO:0007669"/>
    <property type="project" value="UniProtKB-UniRule"/>
</dbReference>
<dbReference type="Gene3D" id="1.10.287.3240">
    <property type="match status" value="1"/>
</dbReference>
<dbReference type="HAMAP" id="MF_00271">
    <property type="entry name" value="ATP_synth_D_arch"/>
    <property type="match status" value="1"/>
</dbReference>
<dbReference type="InterPro" id="IPR002699">
    <property type="entry name" value="V_ATPase_D"/>
</dbReference>
<dbReference type="NCBIfam" id="NF001545">
    <property type="entry name" value="PRK00373.1-4"/>
    <property type="match status" value="1"/>
</dbReference>
<dbReference type="NCBIfam" id="TIGR00309">
    <property type="entry name" value="V_ATPase_subD"/>
    <property type="match status" value="1"/>
</dbReference>
<dbReference type="PANTHER" id="PTHR11671">
    <property type="entry name" value="V-TYPE ATP SYNTHASE SUBUNIT D"/>
    <property type="match status" value="1"/>
</dbReference>
<dbReference type="Pfam" id="PF01813">
    <property type="entry name" value="ATP-synt_D"/>
    <property type="match status" value="1"/>
</dbReference>
<evidence type="ECO:0000255" key="1">
    <source>
        <dbReference type="HAMAP-Rule" id="MF_00271"/>
    </source>
</evidence>
<keyword id="KW-0066">ATP synthesis</keyword>
<keyword id="KW-1003">Cell membrane</keyword>
<keyword id="KW-0375">Hydrogen ion transport</keyword>
<keyword id="KW-0406">Ion transport</keyword>
<keyword id="KW-0472">Membrane</keyword>
<keyword id="KW-1185">Reference proteome</keyword>
<keyword id="KW-0813">Transport</keyword>
<name>AATD_METST</name>
<accession>Q2NF89</accession>
<sequence>MANEKLDGINPTRNELLNLKDRAKLSIKGHSLLKEKRDALIKEFFEILDRVQGSRDEVEKKLAIAYSELNKAQIDMGDMAVKRAALSVRESIELDISSRSIMGVSVPVVKSRATHNDVLSRGYGFAGTSANLDVAAKEFEESIKIIIELGEIEKTIIMLAREVEATKRRVNALEHVIIPRIKNTISFIEMRLEEMERESFAQLKVIKKNIDERE</sequence>
<proteinExistence type="inferred from homology"/>
<protein>
    <recommendedName>
        <fullName evidence="1">A-type ATP synthase subunit D</fullName>
    </recommendedName>
</protein>
<reference key="1">
    <citation type="journal article" date="2006" name="J. Bacteriol.">
        <title>The genome sequence of Methanosphaera stadtmanae reveals why this human intestinal archaeon is restricted to methanol and H2 for methane formation and ATP synthesis.</title>
        <authorList>
            <person name="Fricke W.F."/>
            <person name="Seedorf H."/>
            <person name="Henne A."/>
            <person name="Kruer M."/>
            <person name="Liesegang H."/>
            <person name="Hedderich R."/>
            <person name="Gottschalk G."/>
            <person name="Thauer R.K."/>
        </authorList>
    </citation>
    <scope>NUCLEOTIDE SEQUENCE [LARGE SCALE GENOMIC DNA]</scope>
    <source>
        <strain>ATCC 43021 / DSM 3091 / JCM 11832 / MCB-3</strain>
    </source>
</reference>
<feature type="chain" id="PRO_1000059168" description="A-type ATP synthase subunit D">
    <location>
        <begin position="1"/>
        <end position="214"/>
    </location>
</feature>
<gene>
    <name evidence="1" type="primary">atpD</name>
    <name type="ordered locus">Msp_1133</name>
</gene>
<comment type="function">
    <text evidence="1">Component of the A-type ATP synthase that produces ATP from ADP in the presence of a proton gradient across the membrane.</text>
</comment>
<comment type="subunit">
    <text evidence="1">Has multiple subunits with at least A(3), B(3), C, D, E, F, H, I and proteolipid K(x).</text>
</comment>
<comment type="subcellular location">
    <subcellularLocation>
        <location evidence="1">Cell membrane</location>
        <topology evidence="1">Peripheral membrane protein</topology>
    </subcellularLocation>
</comment>
<comment type="similarity">
    <text evidence="1">Belongs to the V-ATPase D subunit family.</text>
</comment>
<organism>
    <name type="scientific">Methanosphaera stadtmanae (strain ATCC 43021 / DSM 3091 / JCM 11832 / MCB-3)</name>
    <dbReference type="NCBI Taxonomy" id="339860"/>
    <lineage>
        <taxon>Archaea</taxon>
        <taxon>Methanobacteriati</taxon>
        <taxon>Methanobacteriota</taxon>
        <taxon>Methanomada group</taxon>
        <taxon>Methanobacteria</taxon>
        <taxon>Methanobacteriales</taxon>
        <taxon>Methanobacteriaceae</taxon>
        <taxon>Methanosphaera</taxon>
    </lineage>
</organism>